<gene>
    <name evidence="1" type="primary">atpH</name>
    <name type="ordered locus">SO_4750</name>
</gene>
<protein>
    <recommendedName>
        <fullName evidence="1">ATP synthase subunit delta</fullName>
    </recommendedName>
    <alternativeName>
        <fullName evidence="1">ATP synthase F(1) sector subunit delta</fullName>
    </alternativeName>
    <alternativeName>
        <fullName evidence="1">F-type ATPase subunit delta</fullName>
        <shortName evidence="1">F-ATPase subunit delta</shortName>
    </alternativeName>
</protein>
<organism>
    <name type="scientific">Shewanella oneidensis (strain ATCC 700550 / JCM 31522 / CIP 106686 / LMG 19005 / NCIMB 14063 / MR-1)</name>
    <dbReference type="NCBI Taxonomy" id="211586"/>
    <lineage>
        <taxon>Bacteria</taxon>
        <taxon>Pseudomonadati</taxon>
        <taxon>Pseudomonadota</taxon>
        <taxon>Gammaproteobacteria</taxon>
        <taxon>Alteromonadales</taxon>
        <taxon>Shewanellaceae</taxon>
        <taxon>Shewanella</taxon>
    </lineage>
</organism>
<sequence>MAELTTIARPYAKAAFDIAVEHNAVDNWAEMLTFAALVSENETMKPLLTGSLASTKLAALFISVCGEQINEQGQNLIKVMAENGRLKVLPAVSELFAQYRNEWAKEVEADVVSAAELSSEQQQQISISLEKRLARKVKLNCSTDAALIAGVIIKAGDLVIDGSVRGKLSRLSEKLQS</sequence>
<proteinExistence type="inferred from homology"/>
<reference key="1">
    <citation type="journal article" date="2002" name="Nat. Biotechnol.">
        <title>Genome sequence of the dissimilatory metal ion-reducing bacterium Shewanella oneidensis.</title>
        <authorList>
            <person name="Heidelberg J.F."/>
            <person name="Paulsen I.T."/>
            <person name="Nelson K.E."/>
            <person name="Gaidos E.J."/>
            <person name="Nelson W.C."/>
            <person name="Read T.D."/>
            <person name="Eisen J.A."/>
            <person name="Seshadri R."/>
            <person name="Ward N.L."/>
            <person name="Methe B.A."/>
            <person name="Clayton R.A."/>
            <person name="Meyer T."/>
            <person name="Tsapin A."/>
            <person name="Scott J."/>
            <person name="Beanan M.J."/>
            <person name="Brinkac L.M."/>
            <person name="Daugherty S.C."/>
            <person name="DeBoy R.T."/>
            <person name="Dodson R.J."/>
            <person name="Durkin A.S."/>
            <person name="Haft D.H."/>
            <person name="Kolonay J.F."/>
            <person name="Madupu R."/>
            <person name="Peterson J.D."/>
            <person name="Umayam L.A."/>
            <person name="White O."/>
            <person name="Wolf A.M."/>
            <person name="Vamathevan J.J."/>
            <person name="Weidman J.F."/>
            <person name="Impraim M."/>
            <person name="Lee K."/>
            <person name="Berry K.J."/>
            <person name="Lee C."/>
            <person name="Mueller J."/>
            <person name="Khouri H.M."/>
            <person name="Gill J."/>
            <person name="Utterback T.R."/>
            <person name="McDonald L.A."/>
            <person name="Feldblyum T.V."/>
            <person name="Smith H.O."/>
            <person name="Venter J.C."/>
            <person name="Nealson K.H."/>
            <person name="Fraser C.M."/>
        </authorList>
    </citation>
    <scope>NUCLEOTIDE SEQUENCE [LARGE SCALE GENOMIC DNA]</scope>
    <source>
        <strain>ATCC 700550 / JCM 31522 / CIP 106686 / LMG 19005 / NCIMB 14063 / MR-1</strain>
    </source>
</reference>
<accession>Q8E8B7</accession>
<name>ATPD_SHEON</name>
<dbReference type="EMBL" id="AE014299">
    <property type="protein sequence ID" value="AAN57709.1"/>
    <property type="molecule type" value="Genomic_DNA"/>
</dbReference>
<dbReference type="RefSeq" id="NP_720266.1">
    <property type="nucleotide sequence ID" value="NC_004347.2"/>
</dbReference>
<dbReference type="RefSeq" id="WP_011074333.1">
    <property type="nucleotide sequence ID" value="NZ_CP053946.1"/>
</dbReference>
<dbReference type="SMR" id="Q8E8B7"/>
<dbReference type="STRING" id="211586.SO_4750"/>
<dbReference type="PaxDb" id="211586-SO_4750"/>
<dbReference type="KEGG" id="son:SO_4750"/>
<dbReference type="PATRIC" id="fig|211586.12.peg.4607"/>
<dbReference type="eggNOG" id="COG0712">
    <property type="taxonomic scope" value="Bacteria"/>
</dbReference>
<dbReference type="HOGENOM" id="CLU_085114_3_0_6"/>
<dbReference type="OrthoDB" id="9816221at2"/>
<dbReference type="PhylomeDB" id="Q8E8B7"/>
<dbReference type="BioCyc" id="SONE211586:G1GMP-4395-MONOMER"/>
<dbReference type="Proteomes" id="UP000008186">
    <property type="component" value="Chromosome"/>
</dbReference>
<dbReference type="GO" id="GO:0005886">
    <property type="term" value="C:plasma membrane"/>
    <property type="evidence" value="ECO:0007669"/>
    <property type="project" value="UniProtKB-SubCell"/>
</dbReference>
<dbReference type="GO" id="GO:0045259">
    <property type="term" value="C:proton-transporting ATP synthase complex"/>
    <property type="evidence" value="ECO:0007669"/>
    <property type="project" value="UniProtKB-KW"/>
</dbReference>
<dbReference type="GO" id="GO:0046933">
    <property type="term" value="F:proton-transporting ATP synthase activity, rotational mechanism"/>
    <property type="evidence" value="ECO:0007669"/>
    <property type="project" value="UniProtKB-UniRule"/>
</dbReference>
<dbReference type="GO" id="GO:0015986">
    <property type="term" value="P:proton motive force-driven ATP synthesis"/>
    <property type="evidence" value="ECO:0000318"/>
    <property type="project" value="GO_Central"/>
</dbReference>
<dbReference type="Gene3D" id="1.10.520.20">
    <property type="entry name" value="N-terminal domain of the delta subunit of the F1F0-ATP synthase"/>
    <property type="match status" value="1"/>
</dbReference>
<dbReference type="HAMAP" id="MF_01416">
    <property type="entry name" value="ATP_synth_delta_bact"/>
    <property type="match status" value="1"/>
</dbReference>
<dbReference type="InterPro" id="IPR026015">
    <property type="entry name" value="ATP_synth_OSCP/delta_N_sf"/>
</dbReference>
<dbReference type="InterPro" id="IPR020781">
    <property type="entry name" value="ATPase_OSCP/d_CS"/>
</dbReference>
<dbReference type="InterPro" id="IPR000711">
    <property type="entry name" value="ATPase_OSCP/dsu"/>
</dbReference>
<dbReference type="NCBIfam" id="TIGR01145">
    <property type="entry name" value="ATP_synt_delta"/>
    <property type="match status" value="1"/>
</dbReference>
<dbReference type="NCBIfam" id="NF004402">
    <property type="entry name" value="PRK05758.2-2"/>
    <property type="match status" value="1"/>
</dbReference>
<dbReference type="NCBIfam" id="NF004404">
    <property type="entry name" value="PRK05758.2-5"/>
    <property type="match status" value="1"/>
</dbReference>
<dbReference type="PANTHER" id="PTHR11910">
    <property type="entry name" value="ATP SYNTHASE DELTA CHAIN"/>
    <property type="match status" value="1"/>
</dbReference>
<dbReference type="Pfam" id="PF00213">
    <property type="entry name" value="OSCP"/>
    <property type="match status" value="1"/>
</dbReference>
<dbReference type="PRINTS" id="PR00125">
    <property type="entry name" value="ATPASEDELTA"/>
</dbReference>
<dbReference type="SUPFAM" id="SSF47928">
    <property type="entry name" value="N-terminal domain of the delta subunit of the F1F0-ATP synthase"/>
    <property type="match status" value="1"/>
</dbReference>
<dbReference type="PROSITE" id="PS00389">
    <property type="entry name" value="ATPASE_DELTA"/>
    <property type="match status" value="1"/>
</dbReference>
<comment type="function">
    <text evidence="1">F(1)F(0) ATP synthase produces ATP from ADP in the presence of a proton or sodium gradient. F-type ATPases consist of two structural domains, F(1) containing the extramembraneous catalytic core and F(0) containing the membrane proton channel, linked together by a central stalk and a peripheral stalk. During catalysis, ATP synthesis in the catalytic domain of F(1) is coupled via a rotary mechanism of the central stalk subunits to proton translocation.</text>
</comment>
<comment type="function">
    <text evidence="1">This protein is part of the stalk that links CF(0) to CF(1). It either transmits conformational changes from CF(0) to CF(1) or is implicated in proton conduction.</text>
</comment>
<comment type="subunit">
    <text evidence="1">F-type ATPases have 2 components, F(1) - the catalytic core - and F(0) - the membrane proton channel. F(1) has five subunits: alpha(3), beta(3), gamma(1), delta(1), epsilon(1). F(0) has three main subunits: a(1), b(2) and c(10-14). The alpha and beta chains form an alternating ring which encloses part of the gamma chain. F(1) is attached to F(0) by a central stalk formed by the gamma and epsilon chains, while a peripheral stalk is formed by the delta and b chains.</text>
</comment>
<comment type="subcellular location">
    <subcellularLocation>
        <location evidence="1">Cell inner membrane</location>
        <topology evidence="1">Peripheral membrane protein</topology>
    </subcellularLocation>
</comment>
<comment type="similarity">
    <text evidence="1">Belongs to the ATPase delta chain family.</text>
</comment>
<evidence type="ECO:0000255" key="1">
    <source>
        <dbReference type="HAMAP-Rule" id="MF_01416"/>
    </source>
</evidence>
<keyword id="KW-0066">ATP synthesis</keyword>
<keyword id="KW-0997">Cell inner membrane</keyword>
<keyword id="KW-1003">Cell membrane</keyword>
<keyword id="KW-0139">CF(1)</keyword>
<keyword id="KW-0375">Hydrogen ion transport</keyword>
<keyword id="KW-0406">Ion transport</keyword>
<keyword id="KW-0472">Membrane</keyword>
<keyword id="KW-1185">Reference proteome</keyword>
<keyword id="KW-0813">Transport</keyword>
<feature type="chain" id="PRO_0000371130" description="ATP synthase subunit delta">
    <location>
        <begin position="1"/>
        <end position="177"/>
    </location>
</feature>